<sequence>MVKPLPRLRLQGFNNLTKALSFNIYDVCYARTEEERQRYIEYIDEQYDADRLTQILTDVAEIIGANILNIARQDYDPQGASVTILISEEPVIDKKQAGRELISDAVVAHMDKSHITVHTYPETHPQEGIATFRADIDVATCGVISPLKALNYLIETLESDIVIMDYRVRGFTRDVKGKKHYIDHKINSIQHFLAKNVKSRYEMIDVNVYQENIFHTKMHLKDFDLDQYLFEERAKNLSFKERMKIETLLKREIEELFHGRNLSE</sequence>
<feature type="chain" id="PRO_0000030069" description="S-adenosylmethionine decarboxylase beta chain" evidence="1">
    <location>
        <begin position="1"/>
        <end position="112"/>
    </location>
</feature>
<feature type="chain" id="PRO_0000030070" description="S-adenosylmethionine decarboxylase alpha chain" evidence="1">
    <location>
        <begin position="113"/>
        <end position="264"/>
    </location>
</feature>
<feature type="active site" description="Schiff-base intermediate with substrate; via pyruvic acid" evidence="1">
    <location>
        <position position="113"/>
    </location>
</feature>
<feature type="active site" description="Proton acceptor; for processing activity" evidence="1">
    <location>
        <position position="118"/>
    </location>
</feature>
<feature type="active site" description="Proton donor; for catalytic activity" evidence="1">
    <location>
        <position position="141"/>
    </location>
</feature>
<feature type="site" description="Cleavage (non-hydrolytic); by autolysis" evidence="1">
    <location>
        <begin position="112"/>
        <end position="113"/>
    </location>
</feature>
<feature type="modified residue" description="Pyruvic acid (Ser); by autocatalysis" evidence="1">
    <location>
        <position position="113"/>
    </location>
</feature>
<dbReference type="EC" id="4.1.1.50" evidence="1"/>
<dbReference type="EMBL" id="AE013598">
    <property type="protein sequence ID" value="AAW77411.1"/>
    <property type="molecule type" value="Genomic_DNA"/>
</dbReference>
<dbReference type="SMR" id="Q5GV62"/>
<dbReference type="STRING" id="291331.XOO4157"/>
<dbReference type="KEGG" id="xoo:XOO4157"/>
<dbReference type="HOGENOM" id="CLU_092007_0_0_6"/>
<dbReference type="UniPathway" id="UPA00331">
    <property type="reaction ID" value="UER00451"/>
</dbReference>
<dbReference type="Proteomes" id="UP000006735">
    <property type="component" value="Chromosome"/>
</dbReference>
<dbReference type="GO" id="GO:0005829">
    <property type="term" value="C:cytosol"/>
    <property type="evidence" value="ECO:0007669"/>
    <property type="project" value="TreeGrafter"/>
</dbReference>
<dbReference type="GO" id="GO:0004014">
    <property type="term" value="F:adenosylmethionine decarboxylase activity"/>
    <property type="evidence" value="ECO:0007669"/>
    <property type="project" value="UniProtKB-UniRule"/>
</dbReference>
<dbReference type="GO" id="GO:0008295">
    <property type="term" value="P:spermidine biosynthetic process"/>
    <property type="evidence" value="ECO:0007669"/>
    <property type="project" value="UniProtKB-UniRule"/>
</dbReference>
<dbReference type="FunFam" id="3.60.90.10:FF:000001">
    <property type="entry name" value="S-adenosylmethionine decarboxylase proenzyme"/>
    <property type="match status" value="1"/>
</dbReference>
<dbReference type="Gene3D" id="3.60.90.10">
    <property type="entry name" value="S-adenosylmethionine decarboxylase"/>
    <property type="match status" value="1"/>
</dbReference>
<dbReference type="HAMAP" id="MF_00465">
    <property type="entry name" value="AdoMetDC_2"/>
    <property type="match status" value="1"/>
</dbReference>
<dbReference type="InterPro" id="IPR003826">
    <property type="entry name" value="AdoMetDC_fam_prok"/>
</dbReference>
<dbReference type="InterPro" id="IPR009165">
    <property type="entry name" value="S-AdoMet_deCO2ase_bac"/>
</dbReference>
<dbReference type="InterPro" id="IPR016067">
    <property type="entry name" value="S-AdoMet_deCO2ase_core"/>
</dbReference>
<dbReference type="NCBIfam" id="TIGR03331">
    <property type="entry name" value="SAM_DCase_Eco"/>
    <property type="match status" value="1"/>
</dbReference>
<dbReference type="PANTHER" id="PTHR33866">
    <property type="entry name" value="S-ADENOSYLMETHIONINE DECARBOXYLASE PROENZYME"/>
    <property type="match status" value="1"/>
</dbReference>
<dbReference type="PANTHER" id="PTHR33866:SF1">
    <property type="entry name" value="S-ADENOSYLMETHIONINE DECARBOXYLASE PROENZYME"/>
    <property type="match status" value="1"/>
</dbReference>
<dbReference type="Pfam" id="PF02675">
    <property type="entry name" value="AdoMet_dc"/>
    <property type="match status" value="1"/>
</dbReference>
<dbReference type="PIRSF" id="PIRSF001356">
    <property type="entry name" value="SAM_decarboxylas"/>
    <property type="match status" value="1"/>
</dbReference>
<dbReference type="SUPFAM" id="SSF56276">
    <property type="entry name" value="S-adenosylmethionine decarboxylase"/>
    <property type="match status" value="1"/>
</dbReference>
<name>SPED_XANOR</name>
<comment type="function">
    <text evidence="1">Catalyzes the decarboxylation of S-adenosylmethionine to S-adenosylmethioninamine (dcAdoMet), the propylamine donor required for the synthesis of the polyamines spermine and spermidine from the diamine putrescine.</text>
</comment>
<comment type="catalytic activity">
    <reaction evidence="1">
        <text>S-adenosyl-L-methionine + H(+) = S-adenosyl 3-(methylsulfanyl)propylamine + CO2</text>
        <dbReference type="Rhea" id="RHEA:15981"/>
        <dbReference type="ChEBI" id="CHEBI:15378"/>
        <dbReference type="ChEBI" id="CHEBI:16526"/>
        <dbReference type="ChEBI" id="CHEBI:57443"/>
        <dbReference type="ChEBI" id="CHEBI:59789"/>
        <dbReference type="EC" id="4.1.1.50"/>
    </reaction>
</comment>
<comment type="cofactor">
    <cofactor evidence="1">
        <name>pyruvate</name>
        <dbReference type="ChEBI" id="CHEBI:15361"/>
    </cofactor>
    <text evidence="1">Binds 1 pyruvoyl group covalently per subunit.</text>
</comment>
<comment type="pathway">
    <text evidence="1">Amine and polyamine biosynthesis; S-adenosylmethioninamine biosynthesis; S-adenosylmethioninamine from S-adenosyl-L-methionine: step 1/1.</text>
</comment>
<comment type="subunit">
    <text evidence="1">Heterooctamer of four alpha and four beta chains arranged as a tetramer of alpha/beta heterodimers.</text>
</comment>
<comment type="PTM">
    <text evidence="1">Is synthesized initially as an inactive proenzyme. Formation of the active enzyme involves a self-maturation process in which the active site pyruvoyl group is generated from an internal serine residue via an autocatalytic post-translational modification. Two non-identical subunits are generated from the proenzyme in this reaction, and the pyruvate is formed at the N-terminus of the alpha chain, which is derived from the carboxyl end of the proenzyme. The post-translation cleavage follows an unusual pathway, termed non-hydrolytic serinolysis, in which the side chain hydroxyl group of the serine supplies its oxygen atom to form the C-terminus of the beta chain, while the remainder of the serine residue undergoes an oxidative deamination to produce ammonia and the pyruvoyl group blocking the N-terminus of the alpha chain.</text>
</comment>
<comment type="similarity">
    <text evidence="1">Belongs to the prokaryotic AdoMetDC family. Type 2 subfamily.</text>
</comment>
<reference key="1">
    <citation type="journal article" date="2005" name="Nucleic Acids Res.">
        <title>The genome sequence of Xanthomonas oryzae pathovar oryzae KACC10331, the bacterial blight pathogen of rice.</title>
        <authorList>
            <person name="Lee B.-M."/>
            <person name="Park Y.-J."/>
            <person name="Park D.-S."/>
            <person name="Kang H.-W."/>
            <person name="Kim J.-G."/>
            <person name="Song E.-S."/>
            <person name="Park I.-C."/>
            <person name="Yoon U.-H."/>
            <person name="Hahn J.-H."/>
            <person name="Koo B.-S."/>
            <person name="Lee G.-B."/>
            <person name="Kim H."/>
            <person name="Park H.-S."/>
            <person name="Yoon K.-O."/>
            <person name="Kim J.-H."/>
            <person name="Jung C.-H."/>
            <person name="Koh N.-H."/>
            <person name="Seo J.-S."/>
            <person name="Go S.-J."/>
        </authorList>
    </citation>
    <scope>NUCLEOTIDE SEQUENCE [LARGE SCALE GENOMIC DNA]</scope>
    <source>
        <strain>KACC10331 / KXO85</strain>
    </source>
</reference>
<accession>Q5GV62</accession>
<gene>
    <name evidence="1" type="primary">speD</name>
    <name type="ordered locus">XOO4157</name>
</gene>
<evidence type="ECO:0000255" key="1">
    <source>
        <dbReference type="HAMAP-Rule" id="MF_00465"/>
    </source>
</evidence>
<keyword id="KW-0068">Autocatalytic cleavage</keyword>
<keyword id="KW-0210">Decarboxylase</keyword>
<keyword id="KW-0456">Lyase</keyword>
<keyword id="KW-0620">Polyamine biosynthesis</keyword>
<keyword id="KW-0670">Pyruvate</keyword>
<keyword id="KW-1185">Reference proteome</keyword>
<keyword id="KW-0949">S-adenosyl-L-methionine</keyword>
<keyword id="KW-0704">Schiff base</keyword>
<keyword id="KW-0745">Spermidine biosynthesis</keyword>
<keyword id="KW-0865">Zymogen</keyword>
<proteinExistence type="inferred from homology"/>
<protein>
    <recommendedName>
        <fullName evidence="1">S-adenosylmethionine decarboxylase proenzyme</fullName>
        <shortName evidence="1">AdoMetDC</shortName>
        <shortName evidence="1">SAMDC</shortName>
        <ecNumber evidence="1">4.1.1.50</ecNumber>
    </recommendedName>
    <component>
        <recommendedName>
            <fullName evidence="1">S-adenosylmethionine decarboxylase beta chain</fullName>
        </recommendedName>
    </component>
    <component>
        <recommendedName>
            <fullName evidence="1">S-adenosylmethionine decarboxylase alpha chain</fullName>
        </recommendedName>
    </component>
</protein>
<organism>
    <name type="scientific">Xanthomonas oryzae pv. oryzae (strain KACC10331 / KXO85)</name>
    <dbReference type="NCBI Taxonomy" id="291331"/>
    <lineage>
        <taxon>Bacteria</taxon>
        <taxon>Pseudomonadati</taxon>
        <taxon>Pseudomonadota</taxon>
        <taxon>Gammaproteobacteria</taxon>
        <taxon>Lysobacterales</taxon>
        <taxon>Lysobacteraceae</taxon>
        <taxon>Xanthomonas</taxon>
    </lineage>
</organism>